<evidence type="ECO:0000255" key="1">
    <source>
        <dbReference type="HAMAP-Rule" id="MF_00191"/>
    </source>
</evidence>
<feature type="chain" id="PRO_1000021094" description="4-hydroxy-3-methylbut-2-enyl diphosphate reductase">
    <location>
        <begin position="1"/>
        <end position="274"/>
    </location>
</feature>
<feature type="active site" description="Proton donor" evidence="1">
    <location>
        <position position="122"/>
    </location>
</feature>
<feature type="binding site" evidence="1">
    <location>
        <position position="12"/>
    </location>
    <ligand>
        <name>[4Fe-4S] cluster</name>
        <dbReference type="ChEBI" id="CHEBI:49883"/>
    </ligand>
</feature>
<feature type="binding site" evidence="1">
    <location>
        <position position="36"/>
    </location>
    <ligand>
        <name>(2E)-4-hydroxy-3-methylbut-2-enyl diphosphate</name>
        <dbReference type="ChEBI" id="CHEBI:128753"/>
    </ligand>
</feature>
<feature type="binding site" evidence="1">
    <location>
        <position position="36"/>
    </location>
    <ligand>
        <name>dimethylallyl diphosphate</name>
        <dbReference type="ChEBI" id="CHEBI:57623"/>
    </ligand>
</feature>
<feature type="binding site" evidence="1">
    <location>
        <position position="36"/>
    </location>
    <ligand>
        <name>isopentenyl diphosphate</name>
        <dbReference type="ChEBI" id="CHEBI:128769"/>
    </ligand>
</feature>
<feature type="binding site" evidence="1">
    <location>
        <position position="70"/>
    </location>
    <ligand>
        <name>(2E)-4-hydroxy-3-methylbut-2-enyl diphosphate</name>
        <dbReference type="ChEBI" id="CHEBI:128753"/>
    </ligand>
</feature>
<feature type="binding site" evidence="1">
    <location>
        <position position="70"/>
    </location>
    <ligand>
        <name>dimethylallyl diphosphate</name>
        <dbReference type="ChEBI" id="CHEBI:57623"/>
    </ligand>
</feature>
<feature type="binding site" evidence="1">
    <location>
        <position position="70"/>
    </location>
    <ligand>
        <name>isopentenyl diphosphate</name>
        <dbReference type="ChEBI" id="CHEBI:128769"/>
    </ligand>
</feature>
<feature type="binding site" evidence="1">
    <location>
        <position position="92"/>
    </location>
    <ligand>
        <name>[4Fe-4S] cluster</name>
        <dbReference type="ChEBI" id="CHEBI:49883"/>
    </ligand>
</feature>
<feature type="binding site" evidence="1">
    <location>
        <position position="120"/>
    </location>
    <ligand>
        <name>(2E)-4-hydroxy-3-methylbut-2-enyl diphosphate</name>
        <dbReference type="ChEBI" id="CHEBI:128753"/>
    </ligand>
</feature>
<feature type="binding site" evidence="1">
    <location>
        <position position="120"/>
    </location>
    <ligand>
        <name>dimethylallyl diphosphate</name>
        <dbReference type="ChEBI" id="CHEBI:57623"/>
    </ligand>
</feature>
<feature type="binding site" evidence="1">
    <location>
        <position position="120"/>
    </location>
    <ligand>
        <name>isopentenyl diphosphate</name>
        <dbReference type="ChEBI" id="CHEBI:128769"/>
    </ligand>
</feature>
<feature type="binding site" evidence="1">
    <location>
        <position position="158"/>
    </location>
    <ligand>
        <name>(2E)-4-hydroxy-3-methylbut-2-enyl diphosphate</name>
        <dbReference type="ChEBI" id="CHEBI:128753"/>
    </ligand>
</feature>
<feature type="binding site" evidence="1">
    <location>
        <position position="186"/>
    </location>
    <ligand>
        <name>[4Fe-4S] cluster</name>
        <dbReference type="ChEBI" id="CHEBI:49883"/>
    </ligand>
</feature>
<feature type="binding site" evidence="1">
    <location>
        <position position="214"/>
    </location>
    <ligand>
        <name>(2E)-4-hydroxy-3-methylbut-2-enyl diphosphate</name>
        <dbReference type="ChEBI" id="CHEBI:128753"/>
    </ligand>
</feature>
<feature type="binding site" evidence="1">
    <location>
        <position position="214"/>
    </location>
    <ligand>
        <name>dimethylallyl diphosphate</name>
        <dbReference type="ChEBI" id="CHEBI:57623"/>
    </ligand>
</feature>
<feature type="binding site" evidence="1">
    <location>
        <position position="214"/>
    </location>
    <ligand>
        <name>isopentenyl diphosphate</name>
        <dbReference type="ChEBI" id="CHEBI:128769"/>
    </ligand>
</feature>
<feature type="binding site" evidence="1">
    <location>
        <position position="215"/>
    </location>
    <ligand>
        <name>(2E)-4-hydroxy-3-methylbut-2-enyl diphosphate</name>
        <dbReference type="ChEBI" id="CHEBI:128753"/>
    </ligand>
</feature>
<feature type="binding site" evidence="1">
    <location>
        <position position="215"/>
    </location>
    <ligand>
        <name>dimethylallyl diphosphate</name>
        <dbReference type="ChEBI" id="CHEBI:57623"/>
    </ligand>
</feature>
<feature type="binding site" evidence="1">
    <location>
        <position position="215"/>
    </location>
    <ligand>
        <name>isopentenyl diphosphate</name>
        <dbReference type="ChEBI" id="CHEBI:128769"/>
    </ligand>
</feature>
<feature type="binding site" evidence="1">
    <location>
        <position position="216"/>
    </location>
    <ligand>
        <name>(2E)-4-hydroxy-3-methylbut-2-enyl diphosphate</name>
        <dbReference type="ChEBI" id="CHEBI:128753"/>
    </ligand>
</feature>
<feature type="binding site" evidence="1">
    <location>
        <position position="216"/>
    </location>
    <ligand>
        <name>dimethylallyl diphosphate</name>
        <dbReference type="ChEBI" id="CHEBI:57623"/>
    </ligand>
</feature>
<feature type="binding site" evidence="1">
    <location>
        <position position="216"/>
    </location>
    <ligand>
        <name>isopentenyl diphosphate</name>
        <dbReference type="ChEBI" id="CHEBI:128769"/>
    </ligand>
</feature>
<feature type="binding site" evidence="1">
    <location>
        <position position="258"/>
    </location>
    <ligand>
        <name>(2E)-4-hydroxy-3-methylbut-2-enyl diphosphate</name>
        <dbReference type="ChEBI" id="CHEBI:128753"/>
    </ligand>
</feature>
<feature type="binding site" evidence="1">
    <location>
        <position position="258"/>
    </location>
    <ligand>
        <name>dimethylallyl diphosphate</name>
        <dbReference type="ChEBI" id="CHEBI:57623"/>
    </ligand>
</feature>
<feature type="binding site" evidence="1">
    <location>
        <position position="258"/>
    </location>
    <ligand>
        <name>isopentenyl diphosphate</name>
        <dbReference type="ChEBI" id="CHEBI:128769"/>
    </ligand>
</feature>
<protein>
    <recommendedName>
        <fullName evidence="1">4-hydroxy-3-methylbut-2-enyl diphosphate reductase</fullName>
        <shortName evidence="1">HMBPP reductase</shortName>
        <ecNumber evidence="1">1.17.7.4</ecNumber>
    </recommendedName>
</protein>
<proteinExistence type="inferred from homology"/>
<sequence length="274" mass="30618">MKIELASSYGFCFGVKRAIKIAENAGDAATIGPLIHNNEEINRLATNFNVKTLHGINELKDEKKAIIRTHGITKSDLAELKKTDIKVIDATCPFVTKPQQICEDMSNAGYDVVIFGDENHPEVKGVKSYASGKVYVVLDESELEGVKFRQKVALVSQTTRKVEKFMQIANYLMLRVKEVRVFNTICNATFENQEAVKNLAKRADVMIVIGGKNSSNTKQLYLISKNFCEDSYLIESEHEVEKSWFEGKNLCGISAGASTPDWIIQKVVDAIEKF</sequence>
<keyword id="KW-0004">4Fe-4S</keyword>
<keyword id="KW-0408">Iron</keyword>
<keyword id="KW-0411">Iron-sulfur</keyword>
<keyword id="KW-0414">Isoprene biosynthesis</keyword>
<keyword id="KW-0479">Metal-binding</keyword>
<keyword id="KW-0560">Oxidoreductase</keyword>
<keyword id="KW-1185">Reference proteome</keyword>
<name>ISPH_CAMC5</name>
<dbReference type="EC" id="1.17.7.4" evidence="1"/>
<dbReference type="EMBL" id="CP000767">
    <property type="protein sequence ID" value="EAU00772.1"/>
    <property type="molecule type" value="Genomic_DNA"/>
</dbReference>
<dbReference type="RefSeq" id="WP_011992031.1">
    <property type="nucleotide sequence ID" value="NC_009715.2"/>
</dbReference>
<dbReference type="SMR" id="A7GXB5"/>
<dbReference type="STRING" id="360105.CCV52592_0515"/>
<dbReference type="KEGG" id="ccv:CCV52592_0515"/>
<dbReference type="HOGENOM" id="CLU_027486_0_1_7"/>
<dbReference type="OrthoDB" id="9804068at2"/>
<dbReference type="UniPathway" id="UPA00056">
    <property type="reaction ID" value="UER00097"/>
</dbReference>
<dbReference type="UniPathway" id="UPA00059">
    <property type="reaction ID" value="UER00105"/>
</dbReference>
<dbReference type="Proteomes" id="UP000006380">
    <property type="component" value="Chromosome"/>
</dbReference>
<dbReference type="GO" id="GO:0051539">
    <property type="term" value="F:4 iron, 4 sulfur cluster binding"/>
    <property type="evidence" value="ECO:0007669"/>
    <property type="project" value="UniProtKB-UniRule"/>
</dbReference>
<dbReference type="GO" id="GO:0051745">
    <property type="term" value="F:4-hydroxy-3-methylbut-2-enyl diphosphate reductase activity"/>
    <property type="evidence" value="ECO:0007669"/>
    <property type="project" value="UniProtKB-UniRule"/>
</dbReference>
<dbReference type="GO" id="GO:0046872">
    <property type="term" value="F:metal ion binding"/>
    <property type="evidence" value="ECO:0007669"/>
    <property type="project" value="UniProtKB-KW"/>
</dbReference>
<dbReference type="GO" id="GO:0050992">
    <property type="term" value="P:dimethylallyl diphosphate biosynthetic process"/>
    <property type="evidence" value="ECO:0007669"/>
    <property type="project" value="UniProtKB-UniRule"/>
</dbReference>
<dbReference type="GO" id="GO:0019288">
    <property type="term" value="P:isopentenyl diphosphate biosynthetic process, methylerythritol 4-phosphate pathway"/>
    <property type="evidence" value="ECO:0007669"/>
    <property type="project" value="UniProtKB-UniRule"/>
</dbReference>
<dbReference type="GO" id="GO:0016114">
    <property type="term" value="P:terpenoid biosynthetic process"/>
    <property type="evidence" value="ECO:0007669"/>
    <property type="project" value="UniProtKB-UniRule"/>
</dbReference>
<dbReference type="CDD" id="cd13944">
    <property type="entry name" value="lytB_ispH"/>
    <property type="match status" value="1"/>
</dbReference>
<dbReference type="Gene3D" id="3.40.50.11270">
    <property type="match status" value="1"/>
</dbReference>
<dbReference type="Gene3D" id="3.40.1010.20">
    <property type="entry name" value="4-hydroxy-3-methylbut-2-enyl diphosphate reductase, catalytic domain"/>
    <property type="match status" value="2"/>
</dbReference>
<dbReference type="HAMAP" id="MF_00191">
    <property type="entry name" value="IspH"/>
    <property type="match status" value="1"/>
</dbReference>
<dbReference type="InterPro" id="IPR003451">
    <property type="entry name" value="LytB/IspH"/>
</dbReference>
<dbReference type="NCBIfam" id="TIGR00216">
    <property type="entry name" value="ispH_lytB"/>
    <property type="match status" value="1"/>
</dbReference>
<dbReference type="NCBIfam" id="NF002187">
    <property type="entry name" value="PRK01045.1-1"/>
    <property type="match status" value="1"/>
</dbReference>
<dbReference type="PANTHER" id="PTHR30426">
    <property type="entry name" value="4-HYDROXY-3-METHYLBUT-2-ENYL DIPHOSPHATE REDUCTASE"/>
    <property type="match status" value="1"/>
</dbReference>
<dbReference type="PANTHER" id="PTHR30426:SF0">
    <property type="entry name" value="4-HYDROXY-3-METHYLBUT-2-ENYL DIPHOSPHATE REDUCTASE"/>
    <property type="match status" value="1"/>
</dbReference>
<dbReference type="Pfam" id="PF02401">
    <property type="entry name" value="LYTB"/>
    <property type="match status" value="1"/>
</dbReference>
<accession>A7GXB5</accession>
<comment type="function">
    <text evidence="1">Catalyzes the conversion of 1-hydroxy-2-methyl-2-(E)-butenyl 4-diphosphate (HMBPP) into a mixture of isopentenyl diphosphate (IPP) and dimethylallyl diphosphate (DMAPP). Acts in the terminal step of the DOXP/MEP pathway for isoprenoid precursor biosynthesis.</text>
</comment>
<comment type="catalytic activity">
    <reaction evidence="1">
        <text>isopentenyl diphosphate + 2 oxidized [2Fe-2S]-[ferredoxin] + H2O = (2E)-4-hydroxy-3-methylbut-2-enyl diphosphate + 2 reduced [2Fe-2S]-[ferredoxin] + 2 H(+)</text>
        <dbReference type="Rhea" id="RHEA:24488"/>
        <dbReference type="Rhea" id="RHEA-COMP:10000"/>
        <dbReference type="Rhea" id="RHEA-COMP:10001"/>
        <dbReference type="ChEBI" id="CHEBI:15377"/>
        <dbReference type="ChEBI" id="CHEBI:15378"/>
        <dbReference type="ChEBI" id="CHEBI:33737"/>
        <dbReference type="ChEBI" id="CHEBI:33738"/>
        <dbReference type="ChEBI" id="CHEBI:128753"/>
        <dbReference type="ChEBI" id="CHEBI:128769"/>
        <dbReference type="EC" id="1.17.7.4"/>
    </reaction>
</comment>
<comment type="catalytic activity">
    <reaction evidence="1">
        <text>dimethylallyl diphosphate + 2 oxidized [2Fe-2S]-[ferredoxin] + H2O = (2E)-4-hydroxy-3-methylbut-2-enyl diphosphate + 2 reduced [2Fe-2S]-[ferredoxin] + 2 H(+)</text>
        <dbReference type="Rhea" id="RHEA:24825"/>
        <dbReference type="Rhea" id="RHEA-COMP:10000"/>
        <dbReference type="Rhea" id="RHEA-COMP:10001"/>
        <dbReference type="ChEBI" id="CHEBI:15377"/>
        <dbReference type="ChEBI" id="CHEBI:15378"/>
        <dbReference type="ChEBI" id="CHEBI:33737"/>
        <dbReference type="ChEBI" id="CHEBI:33738"/>
        <dbReference type="ChEBI" id="CHEBI:57623"/>
        <dbReference type="ChEBI" id="CHEBI:128753"/>
        <dbReference type="EC" id="1.17.7.4"/>
    </reaction>
</comment>
<comment type="cofactor">
    <cofactor evidence="1">
        <name>[4Fe-4S] cluster</name>
        <dbReference type="ChEBI" id="CHEBI:49883"/>
    </cofactor>
    <text evidence="1">Binds 1 [4Fe-4S] cluster per subunit.</text>
</comment>
<comment type="pathway">
    <text evidence="1">Isoprenoid biosynthesis; dimethylallyl diphosphate biosynthesis; dimethylallyl diphosphate from (2E)-4-hydroxy-3-methylbutenyl diphosphate: step 1/1.</text>
</comment>
<comment type="pathway">
    <text evidence="1">Isoprenoid biosynthesis; isopentenyl diphosphate biosynthesis via DXP pathway; isopentenyl diphosphate from 1-deoxy-D-xylulose 5-phosphate: step 6/6.</text>
</comment>
<comment type="similarity">
    <text evidence="1">Belongs to the IspH family.</text>
</comment>
<reference key="1">
    <citation type="submission" date="2007-07" db="EMBL/GenBank/DDBJ databases">
        <title>Genome sequence of Campylobacter curvus 525.92 isolated from human feces.</title>
        <authorList>
            <person name="Fouts D.E."/>
            <person name="Mongodin E.F."/>
            <person name="Puiu D."/>
            <person name="Sebastian Y."/>
            <person name="Miller W.G."/>
            <person name="Mandrell R.E."/>
            <person name="Lastovica A.J."/>
            <person name="Nelson K.E."/>
        </authorList>
    </citation>
    <scope>NUCLEOTIDE SEQUENCE [LARGE SCALE GENOMIC DNA]</scope>
    <source>
        <strain>525.92</strain>
    </source>
</reference>
<organism>
    <name type="scientific">Campylobacter curvus (strain 525.92)</name>
    <dbReference type="NCBI Taxonomy" id="360105"/>
    <lineage>
        <taxon>Bacteria</taxon>
        <taxon>Pseudomonadati</taxon>
        <taxon>Campylobacterota</taxon>
        <taxon>Epsilonproteobacteria</taxon>
        <taxon>Campylobacterales</taxon>
        <taxon>Campylobacteraceae</taxon>
        <taxon>Campylobacter</taxon>
    </lineage>
</organism>
<gene>
    <name evidence="1" type="primary">ispH</name>
    <name type="ordered locus">Ccur92_05530</name>
    <name type="ORF">CCV52592_0515</name>
</gene>